<sequence length="144" mass="16112">MLLPKRVKWRRVQRGRLKGKSKGGNSVAFGEYGLQALEAAWITSRQIEAARIAMTRYIKRGGKVWIKIFPDKPITAKPAETRMGSGKGSPEYWVAVVKPGRIMFELAGVPEDTAKEAMRLAMHKLPIKCKFVKREEVGGEANES</sequence>
<accession>B0TC63</accession>
<proteinExistence type="inferred from homology"/>
<organism>
    <name type="scientific">Heliobacterium modesticaldum (strain ATCC 51547 / Ice1)</name>
    <dbReference type="NCBI Taxonomy" id="498761"/>
    <lineage>
        <taxon>Bacteria</taxon>
        <taxon>Bacillati</taxon>
        <taxon>Bacillota</taxon>
        <taxon>Clostridia</taxon>
        <taxon>Eubacteriales</taxon>
        <taxon>Heliobacteriaceae</taxon>
        <taxon>Heliomicrobium</taxon>
    </lineage>
</organism>
<dbReference type="EMBL" id="CP000930">
    <property type="protein sequence ID" value="ABZ83962.1"/>
    <property type="molecule type" value="Genomic_DNA"/>
</dbReference>
<dbReference type="RefSeq" id="WP_012282478.1">
    <property type="nucleotide sequence ID" value="NC_010337.2"/>
</dbReference>
<dbReference type="SMR" id="B0TC63"/>
<dbReference type="STRING" id="498761.HM1_1385"/>
<dbReference type="KEGG" id="hmo:HM1_1385"/>
<dbReference type="eggNOG" id="COG0197">
    <property type="taxonomic scope" value="Bacteria"/>
</dbReference>
<dbReference type="HOGENOM" id="CLU_078858_2_1_9"/>
<dbReference type="OrthoDB" id="9802589at2"/>
<dbReference type="Proteomes" id="UP000008550">
    <property type="component" value="Chromosome"/>
</dbReference>
<dbReference type="GO" id="GO:0022625">
    <property type="term" value="C:cytosolic large ribosomal subunit"/>
    <property type="evidence" value="ECO:0007669"/>
    <property type="project" value="TreeGrafter"/>
</dbReference>
<dbReference type="GO" id="GO:0019843">
    <property type="term" value="F:rRNA binding"/>
    <property type="evidence" value="ECO:0007669"/>
    <property type="project" value="UniProtKB-UniRule"/>
</dbReference>
<dbReference type="GO" id="GO:0003735">
    <property type="term" value="F:structural constituent of ribosome"/>
    <property type="evidence" value="ECO:0007669"/>
    <property type="project" value="InterPro"/>
</dbReference>
<dbReference type="GO" id="GO:0000049">
    <property type="term" value="F:tRNA binding"/>
    <property type="evidence" value="ECO:0007669"/>
    <property type="project" value="UniProtKB-KW"/>
</dbReference>
<dbReference type="GO" id="GO:0006412">
    <property type="term" value="P:translation"/>
    <property type="evidence" value="ECO:0007669"/>
    <property type="project" value="UniProtKB-UniRule"/>
</dbReference>
<dbReference type="CDD" id="cd01433">
    <property type="entry name" value="Ribosomal_L16_L10e"/>
    <property type="match status" value="1"/>
</dbReference>
<dbReference type="FunFam" id="3.90.1170.10:FF:000001">
    <property type="entry name" value="50S ribosomal protein L16"/>
    <property type="match status" value="1"/>
</dbReference>
<dbReference type="Gene3D" id="3.90.1170.10">
    <property type="entry name" value="Ribosomal protein L10e/L16"/>
    <property type="match status" value="1"/>
</dbReference>
<dbReference type="HAMAP" id="MF_01342">
    <property type="entry name" value="Ribosomal_uL16"/>
    <property type="match status" value="1"/>
</dbReference>
<dbReference type="InterPro" id="IPR047873">
    <property type="entry name" value="Ribosomal_uL16"/>
</dbReference>
<dbReference type="InterPro" id="IPR000114">
    <property type="entry name" value="Ribosomal_uL16_bact-type"/>
</dbReference>
<dbReference type="InterPro" id="IPR020798">
    <property type="entry name" value="Ribosomal_uL16_CS"/>
</dbReference>
<dbReference type="InterPro" id="IPR016180">
    <property type="entry name" value="Ribosomal_uL16_dom"/>
</dbReference>
<dbReference type="InterPro" id="IPR036920">
    <property type="entry name" value="Ribosomal_uL16_sf"/>
</dbReference>
<dbReference type="NCBIfam" id="TIGR01164">
    <property type="entry name" value="rplP_bact"/>
    <property type="match status" value="1"/>
</dbReference>
<dbReference type="PANTHER" id="PTHR12220">
    <property type="entry name" value="50S/60S RIBOSOMAL PROTEIN L16"/>
    <property type="match status" value="1"/>
</dbReference>
<dbReference type="PANTHER" id="PTHR12220:SF13">
    <property type="entry name" value="LARGE RIBOSOMAL SUBUNIT PROTEIN UL16M"/>
    <property type="match status" value="1"/>
</dbReference>
<dbReference type="Pfam" id="PF00252">
    <property type="entry name" value="Ribosomal_L16"/>
    <property type="match status" value="1"/>
</dbReference>
<dbReference type="PRINTS" id="PR00060">
    <property type="entry name" value="RIBOSOMALL16"/>
</dbReference>
<dbReference type="SUPFAM" id="SSF54686">
    <property type="entry name" value="Ribosomal protein L16p/L10e"/>
    <property type="match status" value="1"/>
</dbReference>
<dbReference type="PROSITE" id="PS00586">
    <property type="entry name" value="RIBOSOMAL_L16_1"/>
    <property type="match status" value="1"/>
</dbReference>
<dbReference type="PROSITE" id="PS00701">
    <property type="entry name" value="RIBOSOMAL_L16_2"/>
    <property type="match status" value="1"/>
</dbReference>
<keyword id="KW-1185">Reference proteome</keyword>
<keyword id="KW-0687">Ribonucleoprotein</keyword>
<keyword id="KW-0689">Ribosomal protein</keyword>
<keyword id="KW-0694">RNA-binding</keyword>
<keyword id="KW-0699">rRNA-binding</keyword>
<keyword id="KW-0820">tRNA-binding</keyword>
<protein>
    <recommendedName>
        <fullName evidence="1">Large ribosomal subunit protein uL16</fullName>
    </recommendedName>
    <alternativeName>
        <fullName evidence="2">50S ribosomal protein L16</fullName>
    </alternativeName>
</protein>
<feature type="chain" id="PRO_1000142979" description="Large ribosomal subunit protein uL16">
    <location>
        <begin position="1"/>
        <end position="144"/>
    </location>
</feature>
<gene>
    <name evidence="1" type="primary">rplP</name>
    <name type="ordered locus">Helmi_13370</name>
    <name type="ORF">HM1_1385</name>
</gene>
<reference key="1">
    <citation type="journal article" date="2008" name="J. Bacteriol.">
        <title>The genome of Heliobacterium modesticaldum, a phototrophic representative of the Firmicutes containing the simplest photosynthetic apparatus.</title>
        <authorList>
            <person name="Sattley W.M."/>
            <person name="Madigan M.T."/>
            <person name="Swingley W.D."/>
            <person name="Cheung P.C."/>
            <person name="Clocksin K.M."/>
            <person name="Conrad A.L."/>
            <person name="Dejesa L.C."/>
            <person name="Honchak B.M."/>
            <person name="Jung D.O."/>
            <person name="Karbach L.E."/>
            <person name="Kurdoglu A."/>
            <person name="Lahiri S."/>
            <person name="Mastrian S.D."/>
            <person name="Page L.E."/>
            <person name="Taylor H.L."/>
            <person name="Wang Z.T."/>
            <person name="Raymond J."/>
            <person name="Chen M."/>
            <person name="Blankenship R.E."/>
            <person name="Touchman J.W."/>
        </authorList>
    </citation>
    <scope>NUCLEOTIDE SEQUENCE [LARGE SCALE GENOMIC DNA]</scope>
    <source>
        <strain>ATCC 51547 / Ice1</strain>
    </source>
</reference>
<comment type="function">
    <text evidence="1">Binds 23S rRNA and is also seen to make contacts with the A and possibly P site tRNAs.</text>
</comment>
<comment type="subunit">
    <text evidence="1">Part of the 50S ribosomal subunit.</text>
</comment>
<comment type="similarity">
    <text evidence="1">Belongs to the universal ribosomal protein uL16 family.</text>
</comment>
<name>RL16_HELMI</name>
<evidence type="ECO:0000255" key="1">
    <source>
        <dbReference type="HAMAP-Rule" id="MF_01342"/>
    </source>
</evidence>
<evidence type="ECO:0000305" key="2"/>